<feature type="chain" id="PRO_0000071611" description="Protein Asterix">
    <location>
        <begin position="1"/>
        <end position="107"/>
    </location>
</feature>
<feature type="transmembrane region" description="Helical" evidence="1">
    <location>
        <begin position="82"/>
        <end position="98"/>
    </location>
</feature>
<feature type="region of interest" description="Disordered" evidence="2">
    <location>
        <begin position="1"/>
        <end position="25"/>
    </location>
</feature>
<feature type="compositionally biased region" description="Polar residues" evidence="2">
    <location>
        <begin position="1"/>
        <end position="15"/>
    </location>
</feature>
<evidence type="ECO:0000255" key="1"/>
<evidence type="ECO:0000256" key="2">
    <source>
        <dbReference type="SAM" id="MobiDB-lite"/>
    </source>
</evidence>
<evidence type="ECO:0000305" key="3"/>
<accession>Q9SD88</accession>
<gene>
    <name type="ordered locus">At5g07960</name>
    <name type="ORF">F13G24.160</name>
    <name type="ORF">MXM12.20</name>
</gene>
<sequence>MSHSHGNASSVNDPRQPSAAKPYIPRPVAPEDLPVDYSGFIAVILGVSGVMFRYKICSWLAIIFCAQSLANMRNLENDLKQISMAMMFAIMGLVTNYLGPNRPATKK</sequence>
<protein>
    <recommendedName>
        <fullName>Protein Asterix</fullName>
    </recommendedName>
</protein>
<name>ASTER_ARATH</name>
<keyword id="KW-0472">Membrane</keyword>
<keyword id="KW-1185">Reference proteome</keyword>
<keyword id="KW-0812">Transmembrane</keyword>
<keyword id="KW-1133">Transmembrane helix</keyword>
<proteinExistence type="inferred from homology"/>
<dbReference type="EMBL" id="AL133421">
    <property type="protein sequence ID" value="CAB62608.1"/>
    <property type="molecule type" value="Genomic_DNA"/>
</dbReference>
<dbReference type="EMBL" id="AB005249">
    <property type="protein sequence ID" value="BAB09960.1"/>
    <property type="molecule type" value="Genomic_DNA"/>
</dbReference>
<dbReference type="EMBL" id="CP002688">
    <property type="protein sequence ID" value="AED91229.1"/>
    <property type="molecule type" value="Genomic_DNA"/>
</dbReference>
<dbReference type="EMBL" id="BT004553">
    <property type="protein sequence ID" value="AAO42799.1"/>
    <property type="molecule type" value="mRNA"/>
</dbReference>
<dbReference type="EMBL" id="AY086219">
    <property type="protein sequence ID" value="AAM64297.1"/>
    <property type="molecule type" value="mRNA"/>
</dbReference>
<dbReference type="PIR" id="T45621">
    <property type="entry name" value="T45621"/>
</dbReference>
<dbReference type="RefSeq" id="NP_196413.1">
    <property type="nucleotide sequence ID" value="NM_120878.3"/>
</dbReference>
<dbReference type="SMR" id="Q9SD88"/>
<dbReference type="BioGRID" id="15968">
    <property type="interactions" value="2"/>
</dbReference>
<dbReference type="FunCoup" id="Q9SD88">
    <property type="interactions" value="2984"/>
</dbReference>
<dbReference type="IntAct" id="Q9SD88">
    <property type="interactions" value="2"/>
</dbReference>
<dbReference type="STRING" id="3702.Q9SD88"/>
<dbReference type="PaxDb" id="3702-AT5G07960.1"/>
<dbReference type="ProteomicsDB" id="246816"/>
<dbReference type="EnsemblPlants" id="AT5G07960.1">
    <property type="protein sequence ID" value="AT5G07960.1"/>
    <property type="gene ID" value="AT5G07960"/>
</dbReference>
<dbReference type="GeneID" id="830690"/>
<dbReference type="Gramene" id="AT5G07960.1">
    <property type="protein sequence ID" value="AT5G07960.1"/>
    <property type="gene ID" value="AT5G07960"/>
</dbReference>
<dbReference type="KEGG" id="ath:AT5G07960"/>
<dbReference type="Araport" id="AT5G07960"/>
<dbReference type="TAIR" id="AT5G07960"/>
<dbReference type="eggNOG" id="KOG3462">
    <property type="taxonomic scope" value="Eukaryota"/>
</dbReference>
<dbReference type="HOGENOM" id="CLU_128526_0_0_1"/>
<dbReference type="InParanoid" id="Q9SD88"/>
<dbReference type="OMA" id="MFGLMMK"/>
<dbReference type="OrthoDB" id="284718at2759"/>
<dbReference type="PhylomeDB" id="Q9SD88"/>
<dbReference type="PRO" id="PR:Q9SD88"/>
<dbReference type="Proteomes" id="UP000006548">
    <property type="component" value="Chromosome 5"/>
</dbReference>
<dbReference type="ExpressionAtlas" id="Q9SD88">
    <property type="expression patterns" value="baseline and differential"/>
</dbReference>
<dbReference type="GO" id="GO:0005789">
    <property type="term" value="C:endoplasmic reticulum membrane"/>
    <property type="evidence" value="ECO:0007669"/>
    <property type="project" value="InterPro"/>
</dbReference>
<dbReference type="GO" id="GO:0044183">
    <property type="term" value="F:protein folding chaperone"/>
    <property type="evidence" value="ECO:0007669"/>
    <property type="project" value="InterPro"/>
</dbReference>
<dbReference type="GO" id="GO:0045048">
    <property type="term" value="P:protein insertion into ER membrane"/>
    <property type="evidence" value="ECO:0007669"/>
    <property type="project" value="InterPro"/>
</dbReference>
<dbReference type="InterPro" id="IPR005351">
    <property type="entry name" value="ASTER"/>
</dbReference>
<dbReference type="PANTHER" id="PTHR13193">
    <property type="entry name" value="CGI-140"/>
    <property type="match status" value="1"/>
</dbReference>
<dbReference type="PANTHER" id="PTHR13193:SF0">
    <property type="entry name" value="PAT COMPLEX SUBUNIT ASTERIX"/>
    <property type="match status" value="1"/>
</dbReference>
<dbReference type="Pfam" id="PF03669">
    <property type="entry name" value="ASTER"/>
    <property type="match status" value="1"/>
</dbReference>
<organism>
    <name type="scientific">Arabidopsis thaliana</name>
    <name type="common">Mouse-ear cress</name>
    <dbReference type="NCBI Taxonomy" id="3702"/>
    <lineage>
        <taxon>Eukaryota</taxon>
        <taxon>Viridiplantae</taxon>
        <taxon>Streptophyta</taxon>
        <taxon>Embryophyta</taxon>
        <taxon>Tracheophyta</taxon>
        <taxon>Spermatophyta</taxon>
        <taxon>Magnoliopsida</taxon>
        <taxon>eudicotyledons</taxon>
        <taxon>Gunneridae</taxon>
        <taxon>Pentapetalae</taxon>
        <taxon>rosids</taxon>
        <taxon>malvids</taxon>
        <taxon>Brassicales</taxon>
        <taxon>Brassicaceae</taxon>
        <taxon>Camelineae</taxon>
        <taxon>Arabidopsis</taxon>
    </lineage>
</organism>
<reference key="1">
    <citation type="journal article" date="2000" name="Nature">
        <title>Sequence and analysis of chromosome 5 of the plant Arabidopsis thaliana.</title>
        <authorList>
            <person name="Tabata S."/>
            <person name="Kaneko T."/>
            <person name="Nakamura Y."/>
            <person name="Kotani H."/>
            <person name="Kato T."/>
            <person name="Asamizu E."/>
            <person name="Miyajima N."/>
            <person name="Sasamoto S."/>
            <person name="Kimura T."/>
            <person name="Hosouchi T."/>
            <person name="Kawashima K."/>
            <person name="Kohara M."/>
            <person name="Matsumoto M."/>
            <person name="Matsuno A."/>
            <person name="Muraki A."/>
            <person name="Nakayama S."/>
            <person name="Nakazaki N."/>
            <person name="Naruo K."/>
            <person name="Okumura S."/>
            <person name="Shinpo S."/>
            <person name="Takeuchi C."/>
            <person name="Wada T."/>
            <person name="Watanabe A."/>
            <person name="Yamada M."/>
            <person name="Yasuda M."/>
            <person name="Sato S."/>
            <person name="de la Bastide M."/>
            <person name="Huang E."/>
            <person name="Spiegel L."/>
            <person name="Gnoj L."/>
            <person name="O'Shaughnessy A."/>
            <person name="Preston R."/>
            <person name="Habermann K."/>
            <person name="Murray J."/>
            <person name="Johnson D."/>
            <person name="Rohlfing T."/>
            <person name="Nelson J."/>
            <person name="Stoneking T."/>
            <person name="Pepin K."/>
            <person name="Spieth J."/>
            <person name="Sekhon M."/>
            <person name="Armstrong J."/>
            <person name="Becker M."/>
            <person name="Belter E."/>
            <person name="Cordum H."/>
            <person name="Cordes M."/>
            <person name="Courtney L."/>
            <person name="Courtney W."/>
            <person name="Dante M."/>
            <person name="Du H."/>
            <person name="Edwards J."/>
            <person name="Fryman J."/>
            <person name="Haakensen B."/>
            <person name="Lamar E."/>
            <person name="Latreille P."/>
            <person name="Leonard S."/>
            <person name="Meyer R."/>
            <person name="Mulvaney E."/>
            <person name="Ozersky P."/>
            <person name="Riley A."/>
            <person name="Strowmatt C."/>
            <person name="Wagner-McPherson C."/>
            <person name="Wollam A."/>
            <person name="Yoakum M."/>
            <person name="Bell M."/>
            <person name="Dedhia N."/>
            <person name="Parnell L."/>
            <person name="Shah R."/>
            <person name="Rodriguez M."/>
            <person name="Hoon See L."/>
            <person name="Vil D."/>
            <person name="Baker J."/>
            <person name="Kirchoff K."/>
            <person name="Toth K."/>
            <person name="King L."/>
            <person name="Bahret A."/>
            <person name="Miller B."/>
            <person name="Marra M.A."/>
            <person name="Martienssen R."/>
            <person name="McCombie W.R."/>
            <person name="Wilson R.K."/>
            <person name="Murphy G."/>
            <person name="Bancroft I."/>
            <person name="Volckaert G."/>
            <person name="Wambutt R."/>
            <person name="Duesterhoeft A."/>
            <person name="Stiekema W."/>
            <person name="Pohl T."/>
            <person name="Entian K.-D."/>
            <person name="Terryn N."/>
            <person name="Hartley N."/>
            <person name="Bent E."/>
            <person name="Johnson S."/>
            <person name="Langham S.-A."/>
            <person name="McCullagh B."/>
            <person name="Robben J."/>
            <person name="Grymonprez B."/>
            <person name="Zimmermann W."/>
            <person name="Ramsperger U."/>
            <person name="Wedler H."/>
            <person name="Balke K."/>
            <person name="Wedler E."/>
            <person name="Peters S."/>
            <person name="van Staveren M."/>
            <person name="Dirkse W."/>
            <person name="Mooijman P."/>
            <person name="Klein Lankhorst R."/>
            <person name="Weitzenegger T."/>
            <person name="Bothe G."/>
            <person name="Rose M."/>
            <person name="Hauf J."/>
            <person name="Berneiser S."/>
            <person name="Hempel S."/>
            <person name="Feldpausch M."/>
            <person name="Lamberth S."/>
            <person name="Villarroel R."/>
            <person name="Gielen J."/>
            <person name="Ardiles W."/>
            <person name="Bents O."/>
            <person name="Lemcke K."/>
            <person name="Kolesov G."/>
            <person name="Mayer K.F.X."/>
            <person name="Rudd S."/>
            <person name="Schoof H."/>
            <person name="Schueller C."/>
            <person name="Zaccaria P."/>
            <person name="Mewes H.-W."/>
            <person name="Bevan M."/>
            <person name="Fransz P.F."/>
        </authorList>
    </citation>
    <scope>NUCLEOTIDE SEQUENCE [LARGE SCALE GENOMIC DNA]</scope>
    <source>
        <strain>cv. Columbia</strain>
    </source>
</reference>
<reference key="2">
    <citation type="journal article" date="1997" name="DNA Res.">
        <title>Structural analysis of Arabidopsis thaliana chromosome 5. I. Sequence features of the 1.6 Mb regions covered by twenty physically assigned P1 clones.</title>
        <authorList>
            <person name="Sato S."/>
            <person name="Kotani H."/>
            <person name="Nakamura Y."/>
            <person name="Kaneko T."/>
            <person name="Asamizu E."/>
            <person name="Fukami M."/>
            <person name="Miyajima N."/>
            <person name="Tabata S."/>
        </authorList>
    </citation>
    <scope>NUCLEOTIDE SEQUENCE [LARGE SCALE GENOMIC DNA]</scope>
    <source>
        <strain>cv. Columbia</strain>
    </source>
</reference>
<reference key="3">
    <citation type="journal article" date="2017" name="Plant J.">
        <title>Araport11: a complete reannotation of the Arabidopsis thaliana reference genome.</title>
        <authorList>
            <person name="Cheng C.Y."/>
            <person name="Krishnakumar V."/>
            <person name="Chan A.P."/>
            <person name="Thibaud-Nissen F."/>
            <person name="Schobel S."/>
            <person name="Town C.D."/>
        </authorList>
    </citation>
    <scope>GENOME REANNOTATION</scope>
    <source>
        <strain>cv. Columbia</strain>
    </source>
</reference>
<reference key="4">
    <citation type="journal article" date="2003" name="Science">
        <title>Empirical analysis of transcriptional activity in the Arabidopsis genome.</title>
        <authorList>
            <person name="Yamada K."/>
            <person name="Lim J."/>
            <person name="Dale J.M."/>
            <person name="Chen H."/>
            <person name="Shinn P."/>
            <person name="Palm C.J."/>
            <person name="Southwick A.M."/>
            <person name="Wu H.C."/>
            <person name="Kim C.J."/>
            <person name="Nguyen M."/>
            <person name="Pham P.K."/>
            <person name="Cheuk R.F."/>
            <person name="Karlin-Newmann G."/>
            <person name="Liu S.X."/>
            <person name="Lam B."/>
            <person name="Sakano H."/>
            <person name="Wu T."/>
            <person name="Yu G."/>
            <person name="Miranda M."/>
            <person name="Quach H.L."/>
            <person name="Tripp M."/>
            <person name="Chang C.H."/>
            <person name="Lee J.M."/>
            <person name="Toriumi M.J."/>
            <person name="Chan M.M."/>
            <person name="Tang C.C."/>
            <person name="Onodera C.S."/>
            <person name="Deng J.M."/>
            <person name="Akiyama K."/>
            <person name="Ansari Y."/>
            <person name="Arakawa T."/>
            <person name="Banh J."/>
            <person name="Banno F."/>
            <person name="Bowser L."/>
            <person name="Brooks S.Y."/>
            <person name="Carninci P."/>
            <person name="Chao Q."/>
            <person name="Choy N."/>
            <person name="Enju A."/>
            <person name="Goldsmith A.D."/>
            <person name="Gurjal M."/>
            <person name="Hansen N.F."/>
            <person name="Hayashizaki Y."/>
            <person name="Johnson-Hopson C."/>
            <person name="Hsuan V.W."/>
            <person name="Iida K."/>
            <person name="Karnes M."/>
            <person name="Khan S."/>
            <person name="Koesema E."/>
            <person name="Ishida J."/>
            <person name="Jiang P.X."/>
            <person name="Jones T."/>
            <person name="Kawai J."/>
            <person name="Kamiya A."/>
            <person name="Meyers C."/>
            <person name="Nakajima M."/>
            <person name="Narusaka M."/>
            <person name="Seki M."/>
            <person name="Sakurai T."/>
            <person name="Satou M."/>
            <person name="Tamse R."/>
            <person name="Vaysberg M."/>
            <person name="Wallender E.K."/>
            <person name="Wong C."/>
            <person name="Yamamura Y."/>
            <person name="Yuan S."/>
            <person name="Shinozaki K."/>
            <person name="Davis R.W."/>
            <person name="Theologis A."/>
            <person name="Ecker J.R."/>
        </authorList>
    </citation>
    <scope>NUCLEOTIDE SEQUENCE [LARGE SCALE MRNA]</scope>
    <source>
        <strain>cv. Columbia</strain>
    </source>
</reference>
<reference key="5">
    <citation type="submission" date="2002-03" db="EMBL/GenBank/DDBJ databases">
        <title>Full-length cDNA from Arabidopsis thaliana.</title>
        <authorList>
            <person name="Brover V.V."/>
            <person name="Troukhan M.E."/>
            <person name="Alexandrov N.A."/>
            <person name="Lu Y.-P."/>
            <person name="Flavell R.B."/>
            <person name="Feldmann K.A."/>
        </authorList>
    </citation>
    <scope>NUCLEOTIDE SEQUENCE [LARGE SCALE MRNA]</scope>
</reference>
<comment type="subcellular location">
    <subcellularLocation>
        <location evidence="3">Membrane</location>
        <topology evidence="3">Single-pass membrane protein</topology>
    </subcellularLocation>
</comment>
<comment type="similarity">
    <text evidence="3">Belongs to the Asterix family.</text>
</comment>